<protein>
    <recommendedName>
        <fullName>Foldase protein PrsA 3</fullName>
        <ecNumber>5.2.1.8</ecNumber>
    </recommendedName>
</protein>
<dbReference type="EC" id="5.2.1.8"/>
<dbReference type="EMBL" id="AE016879">
    <property type="protein sequence ID" value="AAP26206.1"/>
    <property type="status" value="ALT_INIT"/>
    <property type="molecule type" value="Genomic_DNA"/>
</dbReference>
<dbReference type="EMBL" id="AE017334">
    <property type="protein sequence ID" value="AAT31456.2"/>
    <property type="status" value="ALT_INIT"/>
    <property type="molecule type" value="Genomic_DNA"/>
</dbReference>
<dbReference type="EMBL" id="AE017225">
    <property type="protein sequence ID" value="AAT54490.1"/>
    <property type="molecule type" value="Genomic_DNA"/>
</dbReference>
<dbReference type="RefSeq" id="NP_844720.1">
    <property type="nucleotide sequence ID" value="NC_003997.3"/>
</dbReference>
<dbReference type="RefSeq" id="WP_000727474.1">
    <property type="nucleotide sequence ID" value="NZ_WXXI01000004.1"/>
</dbReference>
<dbReference type="RefSeq" id="YP_028439.1">
    <property type="nucleotide sequence ID" value="NC_005945.1"/>
</dbReference>
<dbReference type="SMR" id="Q81QT1"/>
<dbReference type="STRING" id="261594.GBAA_2336"/>
<dbReference type="DNASU" id="1084443"/>
<dbReference type="GeneID" id="45022219"/>
<dbReference type="KEGG" id="ban:BA_2336"/>
<dbReference type="KEGG" id="bar:GBAA_2336"/>
<dbReference type="KEGG" id="bat:BAS2178"/>
<dbReference type="PATRIC" id="fig|198094.11.peg.2305"/>
<dbReference type="eggNOG" id="COG0760">
    <property type="taxonomic scope" value="Bacteria"/>
</dbReference>
<dbReference type="HOGENOM" id="CLU_034646_6_1_9"/>
<dbReference type="OMA" id="DYKDRDI"/>
<dbReference type="OrthoDB" id="14196at2"/>
<dbReference type="Proteomes" id="UP000000427">
    <property type="component" value="Chromosome"/>
</dbReference>
<dbReference type="Proteomes" id="UP000000594">
    <property type="component" value="Chromosome"/>
</dbReference>
<dbReference type="GO" id="GO:0005886">
    <property type="term" value="C:plasma membrane"/>
    <property type="evidence" value="ECO:0007669"/>
    <property type="project" value="UniProtKB-SubCell"/>
</dbReference>
<dbReference type="GO" id="GO:0003755">
    <property type="term" value="F:peptidyl-prolyl cis-trans isomerase activity"/>
    <property type="evidence" value="ECO:0007669"/>
    <property type="project" value="UniProtKB-UniRule"/>
</dbReference>
<dbReference type="GO" id="GO:0006457">
    <property type="term" value="P:protein folding"/>
    <property type="evidence" value="ECO:0007669"/>
    <property type="project" value="UniProtKB-UniRule"/>
</dbReference>
<dbReference type="FunFam" id="3.10.50.40:FF:000033">
    <property type="entry name" value="Foldase protein PrsA"/>
    <property type="match status" value="1"/>
</dbReference>
<dbReference type="Gene3D" id="3.10.50.40">
    <property type="match status" value="1"/>
</dbReference>
<dbReference type="HAMAP" id="MF_01145">
    <property type="entry name" value="Foldase_PrsA"/>
    <property type="match status" value="1"/>
</dbReference>
<dbReference type="InterPro" id="IPR023059">
    <property type="entry name" value="Foldase_PrsA"/>
</dbReference>
<dbReference type="InterPro" id="IPR046357">
    <property type="entry name" value="PPIase_dom_sf"/>
</dbReference>
<dbReference type="InterPro" id="IPR000297">
    <property type="entry name" value="PPIase_PpiC"/>
</dbReference>
<dbReference type="InterPro" id="IPR050245">
    <property type="entry name" value="PrsA_foldase"/>
</dbReference>
<dbReference type="InterPro" id="IPR027304">
    <property type="entry name" value="Trigger_fact/SurA_dom_sf"/>
</dbReference>
<dbReference type="NCBIfam" id="NF002824">
    <property type="entry name" value="PRK02998.1"/>
    <property type="match status" value="1"/>
</dbReference>
<dbReference type="PANTHER" id="PTHR47245:SF1">
    <property type="entry name" value="FOLDASE PROTEIN PRSA"/>
    <property type="match status" value="1"/>
</dbReference>
<dbReference type="PANTHER" id="PTHR47245">
    <property type="entry name" value="PEPTIDYLPROLYL ISOMERASE"/>
    <property type="match status" value="1"/>
</dbReference>
<dbReference type="Pfam" id="PF13616">
    <property type="entry name" value="Rotamase_3"/>
    <property type="match status" value="1"/>
</dbReference>
<dbReference type="SUPFAM" id="SSF54534">
    <property type="entry name" value="FKBP-like"/>
    <property type="match status" value="1"/>
</dbReference>
<dbReference type="SUPFAM" id="SSF109998">
    <property type="entry name" value="Triger factor/SurA peptide-binding domain-like"/>
    <property type="match status" value="1"/>
</dbReference>
<dbReference type="PROSITE" id="PS50198">
    <property type="entry name" value="PPIC_PPIASE_2"/>
    <property type="match status" value="1"/>
</dbReference>
<dbReference type="PROSITE" id="PS51257">
    <property type="entry name" value="PROKAR_LIPOPROTEIN"/>
    <property type="match status" value="1"/>
</dbReference>
<accession>Q81QT1</accession>
<accession>Q6HYZ9</accession>
<accession>Q6KSZ8</accession>
<proteinExistence type="evidence at protein level"/>
<name>PRSA3_BACAN</name>
<reference key="1">
    <citation type="journal article" date="2003" name="Nature">
        <title>The genome sequence of Bacillus anthracis Ames and comparison to closely related bacteria.</title>
        <authorList>
            <person name="Read T.D."/>
            <person name="Peterson S.N."/>
            <person name="Tourasse N.J."/>
            <person name="Baillie L.W."/>
            <person name="Paulsen I.T."/>
            <person name="Nelson K.E."/>
            <person name="Tettelin H."/>
            <person name="Fouts D.E."/>
            <person name="Eisen J.A."/>
            <person name="Gill S.R."/>
            <person name="Holtzapple E.K."/>
            <person name="Okstad O.A."/>
            <person name="Helgason E."/>
            <person name="Rilstone J."/>
            <person name="Wu M."/>
            <person name="Kolonay J.F."/>
            <person name="Beanan M.J."/>
            <person name="Dodson R.J."/>
            <person name="Brinkac L.M."/>
            <person name="Gwinn M.L."/>
            <person name="DeBoy R.T."/>
            <person name="Madpu R."/>
            <person name="Daugherty S.C."/>
            <person name="Durkin A.S."/>
            <person name="Haft D.H."/>
            <person name="Nelson W.C."/>
            <person name="Peterson J.D."/>
            <person name="Pop M."/>
            <person name="Khouri H.M."/>
            <person name="Radune D."/>
            <person name="Benton J.L."/>
            <person name="Mahamoud Y."/>
            <person name="Jiang L."/>
            <person name="Hance I.R."/>
            <person name="Weidman J.F."/>
            <person name="Berry K.J."/>
            <person name="Plaut R.D."/>
            <person name="Wolf A.M."/>
            <person name="Watkins K.L."/>
            <person name="Nierman W.C."/>
            <person name="Hazen A."/>
            <person name="Cline R.T."/>
            <person name="Redmond C."/>
            <person name="Thwaite J.E."/>
            <person name="White O."/>
            <person name="Salzberg S.L."/>
            <person name="Thomason B."/>
            <person name="Friedlander A.M."/>
            <person name="Koehler T.M."/>
            <person name="Hanna P.C."/>
            <person name="Kolstoe A.-B."/>
            <person name="Fraser C.M."/>
        </authorList>
    </citation>
    <scope>NUCLEOTIDE SEQUENCE [LARGE SCALE GENOMIC DNA]</scope>
    <source>
        <strain>Ames / isolate Porton</strain>
    </source>
</reference>
<reference key="2">
    <citation type="journal article" date="2009" name="J. Bacteriol.">
        <title>The complete genome sequence of Bacillus anthracis Ames 'Ancestor'.</title>
        <authorList>
            <person name="Ravel J."/>
            <person name="Jiang L."/>
            <person name="Stanley S.T."/>
            <person name="Wilson M.R."/>
            <person name="Decker R.S."/>
            <person name="Read T.D."/>
            <person name="Worsham P."/>
            <person name="Keim P.S."/>
            <person name="Salzberg S.L."/>
            <person name="Fraser-Liggett C.M."/>
            <person name="Rasko D.A."/>
        </authorList>
    </citation>
    <scope>NUCLEOTIDE SEQUENCE [LARGE SCALE GENOMIC DNA]</scope>
    <source>
        <strain>Ames ancestor</strain>
    </source>
</reference>
<reference key="3">
    <citation type="submission" date="2004-01" db="EMBL/GenBank/DDBJ databases">
        <title>Complete genome sequence of Bacillus anthracis Sterne.</title>
        <authorList>
            <person name="Brettin T.S."/>
            <person name="Bruce D."/>
            <person name="Challacombe J.F."/>
            <person name="Gilna P."/>
            <person name="Han C."/>
            <person name="Hill K."/>
            <person name="Hitchcock P."/>
            <person name="Jackson P."/>
            <person name="Keim P."/>
            <person name="Longmire J."/>
            <person name="Lucas S."/>
            <person name="Okinaka R."/>
            <person name="Richardson P."/>
            <person name="Rubin E."/>
            <person name="Tice H."/>
        </authorList>
    </citation>
    <scope>NUCLEOTIDE SEQUENCE [LARGE SCALE GENOMIC DNA]</scope>
    <source>
        <strain>Sterne</strain>
    </source>
</reference>
<reference key="4">
    <citation type="journal article" date="2003" name="J. Biol. Chem.">
        <title>Production of Bacillus anthracis protective antigen is dependent on the extracellular chaperone, PrsA.</title>
        <authorList>
            <person name="Williams R.C."/>
            <person name="Rees M.L."/>
            <person name="Jacobs M.F."/>
            <person name="Pragai Z."/>
            <person name="Thwaite J.E."/>
            <person name="Baillie L.W."/>
            <person name="Emmerson P.T."/>
            <person name="Harwood C.R."/>
        </authorList>
    </citation>
    <scope>CHARACTERIZATION</scope>
</reference>
<keyword id="KW-1003">Cell membrane</keyword>
<keyword id="KW-0413">Isomerase</keyword>
<keyword id="KW-0449">Lipoprotein</keyword>
<keyword id="KW-0472">Membrane</keyword>
<keyword id="KW-0564">Palmitate</keyword>
<keyword id="KW-1185">Reference proteome</keyword>
<keyword id="KW-0697">Rotamase</keyword>
<keyword id="KW-0732">Signal</keyword>
<gene>
    <name type="primary">prsA3</name>
    <name type="synonym">prsA-3</name>
    <name type="ordered locus">BA_2336</name>
    <name type="ordered locus">GBAA_2336</name>
    <name type="ordered locus">BAS2178</name>
</gene>
<organism>
    <name type="scientific">Bacillus anthracis</name>
    <dbReference type="NCBI Taxonomy" id="1392"/>
    <lineage>
        <taxon>Bacteria</taxon>
        <taxon>Bacillati</taxon>
        <taxon>Bacillota</taxon>
        <taxon>Bacilli</taxon>
        <taxon>Bacillales</taxon>
        <taxon>Bacillaceae</taxon>
        <taxon>Bacillus</taxon>
        <taxon>Bacillus cereus group</taxon>
    </lineage>
</organism>
<evidence type="ECO:0000255" key="1"/>
<evidence type="ECO:0000305" key="2"/>
<sequence length="283" mass="32083">MKKKKLFLGTIISCVVLALSACGSSDNVVTSKVGNITEKELSKELRQKYGESTLYQMVLSKALLDKYKVSDEEAKKQVEEAKDKMGDNFKSTLEQVGLKNEDELKEKMKPEIAFEKAIKATVTEKDVKDNYKPEMKVSHILVKDEKTAKEVKEKVNNGEDFAALAKQYSEDTGSKEQGGEITGFAPGQTVKEFEEAAYKLDAGQVSEPVKTTYGYHIIKVTDKKELKPFDEVKDSIRKDIEQQRLQDTTGKWKQQVVNELLKDADIKVNDKEFKNTFEFLEKK</sequence>
<feature type="signal peptide" evidence="1">
    <location>
        <begin position="1"/>
        <end position="21"/>
    </location>
</feature>
<feature type="chain" id="PRO_0000029293" description="Foldase protein PrsA 3">
    <location>
        <begin position="22"/>
        <end position="283"/>
    </location>
</feature>
<feature type="domain" description="PpiC">
    <location>
        <begin position="132"/>
        <end position="222"/>
    </location>
</feature>
<feature type="lipid moiety-binding region" description="N-palmitoyl cysteine" evidence="1">
    <location>
        <position position="22"/>
    </location>
</feature>
<feature type="lipid moiety-binding region" description="S-diacylglycerol cysteine" evidence="1">
    <location>
        <position position="22"/>
    </location>
</feature>
<comment type="function">
    <text>Plays a major role in protein secretion by helping the post-translocational extracellular folding of several secreted proteins. Important for the secretion of the protective antigen. The three PsrA proteins in this organism show different but overlapping substrate specificities.</text>
</comment>
<comment type="catalytic activity">
    <reaction>
        <text>[protein]-peptidylproline (omega=180) = [protein]-peptidylproline (omega=0)</text>
        <dbReference type="Rhea" id="RHEA:16237"/>
        <dbReference type="Rhea" id="RHEA-COMP:10747"/>
        <dbReference type="Rhea" id="RHEA-COMP:10748"/>
        <dbReference type="ChEBI" id="CHEBI:83833"/>
        <dbReference type="ChEBI" id="CHEBI:83834"/>
        <dbReference type="EC" id="5.2.1.8"/>
    </reaction>
</comment>
<comment type="subcellular location">
    <subcellularLocation>
        <location evidence="2">Cell membrane</location>
        <topology evidence="2">Lipid-anchor</topology>
    </subcellularLocation>
</comment>
<comment type="similarity">
    <text evidence="2">Belongs to the PrsA family.</text>
</comment>
<comment type="sequence caution" evidence="2">
    <conflict type="erroneous initiation">
        <sequence resource="EMBL-CDS" id="AAP26206"/>
    </conflict>
</comment>
<comment type="sequence caution" evidence="2">
    <conflict type="erroneous initiation">
        <sequence resource="EMBL-CDS" id="AAT31456"/>
    </conflict>
</comment>